<name>NU2C2_CYCTA</name>
<organism>
    <name type="scientific">Cycas taitungensis</name>
    <name type="common">Prince sago</name>
    <name type="synonym">Cycas taiwaniana</name>
    <dbReference type="NCBI Taxonomy" id="54799"/>
    <lineage>
        <taxon>Eukaryota</taxon>
        <taxon>Viridiplantae</taxon>
        <taxon>Streptophyta</taxon>
        <taxon>Embryophyta</taxon>
        <taxon>Tracheophyta</taxon>
        <taxon>Spermatophyta</taxon>
        <taxon>Cycadidae</taxon>
        <taxon>Cycadales</taxon>
        <taxon>Cycadaceae</taxon>
        <taxon>Cycas</taxon>
    </lineage>
</organism>
<sequence>MKEFHLLLFHGGSIFPECILILGLILLLMIDLTSDQKDTPWFYFISLTSLVMSITVLLFRWREEPMISFLGNFQTSNFSKIFRFLILLCSTLCIPLSVEYIKCTEMAITEFLLFLLTAALGGMVLCGANDLVTIFVALECFSLCSYLLSGYTKRDVRSNEATMKYLLMGGASSSILVYGFSWLYGLSGGEIELQEVVNGLINTQMYNSPGILIALISIAVGIGFKLSLVPFHQWTPDVYEGSPTPVVAFLSVTSKVAASALATRIFDLIFYFSSNEWHLLLEILAILSMILGNLIAITQTSMKRMLAYSSMGQIGYIIIGIIAGDSKNGYASMITYMLFYIFMNLGTFACIVLFGLRTGTDNIRDYAGLYTKDPFSAFSLALCLLSLGGIPPLAGFFGKLYLFWCGWQAGSYLLVSIGPLMSVISIYYYLKIIKLLMTERNKEITPHVQNYRRSPSSFISKNSIELSMIVCVTASTTLGIVMNPIIAIAQDTLF</sequence>
<keyword id="KW-0150">Chloroplast</keyword>
<keyword id="KW-0472">Membrane</keyword>
<keyword id="KW-0520">NAD</keyword>
<keyword id="KW-0521">NADP</keyword>
<keyword id="KW-0934">Plastid</keyword>
<keyword id="KW-0618">Plastoquinone</keyword>
<keyword id="KW-0874">Quinone</keyword>
<keyword id="KW-0793">Thylakoid</keyword>
<keyword id="KW-1278">Translocase</keyword>
<keyword id="KW-0812">Transmembrane</keyword>
<keyword id="KW-1133">Transmembrane helix</keyword>
<keyword id="KW-0813">Transport</keyword>
<dbReference type="EC" id="7.1.1.-" evidence="1"/>
<dbReference type="EMBL" id="AP009339">
    <property type="protein sequence ID" value="BAF65029.1"/>
    <property type="molecule type" value="Genomic_DNA"/>
</dbReference>
<dbReference type="SMR" id="P0CC53"/>
<dbReference type="GO" id="GO:0009535">
    <property type="term" value="C:chloroplast thylakoid membrane"/>
    <property type="evidence" value="ECO:0007669"/>
    <property type="project" value="UniProtKB-SubCell"/>
</dbReference>
<dbReference type="GO" id="GO:0008137">
    <property type="term" value="F:NADH dehydrogenase (ubiquinone) activity"/>
    <property type="evidence" value="ECO:0007669"/>
    <property type="project" value="InterPro"/>
</dbReference>
<dbReference type="GO" id="GO:0048038">
    <property type="term" value="F:quinone binding"/>
    <property type="evidence" value="ECO:0007669"/>
    <property type="project" value="UniProtKB-KW"/>
</dbReference>
<dbReference type="GO" id="GO:0042773">
    <property type="term" value="P:ATP synthesis coupled electron transport"/>
    <property type="evidence" value="ECO:0007669"/>
    <property type="project" value="InterPro"/>
</dbReference>
<dbReference type="GO" id="GO:0019684">
    <property type="term" value="P:photosynthesis, light reaction"/>
    <property type="evidence" value="ECO:0007669"/>
    <property type="project" value="UniProtKB-UniRule"/>
</dbReference>
<dbReference type="HAMAP" id="MF_00445">
    <property type="entry name" value="NDH1_NuoN_1"/>
    <property type="match status" value="1"/>
</dbReference>
<dbReference type="InterPro" id="IPR010096">
    <property type="entry name" value="NADH-Q_OxRdtase_suN/2"/>
</dbReference>
<dbReference type="InterPro" id="IPR001750">
    <property type="entry name" value="ND/Mrp_TM"/>
</dbReference>
<dbReference type="InterPro" id="IPR045693">
    <property type="entry name" value="Ndh2_N"/>
</dbReference>
<dbReference type="NCBIfam" id="TIGR01770">
    <property type="entry name" value="NDH_I_N"/>
    <property type="match status" value="1"/>
</dbReference>
<dbReference type="NCBIfam" id="NF002701">
    <property type="entry name" value="PRK02504.1"/>
    <property type="match status" value="1"/>
</dbReference>
<dbReference type="PANTHER" id="PTHR22773">
    <property type="entry name" value="NADH DEHYDROGENASE"/>
    <property type="match status" value="1"/>
</dbReference>
<dbReference type="Pfam" id="PF19530">
    <property type="entry name" value="Ndh2_N"/>
    <property type="match status" value="1"/>
</dbReference>
<dbReference type="Pfam" id="PF00361">
    <property type="entry name" value="Proton_antipo_M"/>
    <property type="match status" value="1"/>
</dbReference>
<comment type="function">
    <text evidence="1">NDH shuttles electrons from NAD(P)H:plastoquinone, via FMN and iron-sulfur (Fe-S) centers, to quinones in the photosynthetic chain and possibly in a chloroplast respiratory chain. The immediate electron acceptor for the enzyme in this species is believed to be plastoquinone. Couples the redox reaction to proton translocation, and thus conserves the redox energy in a proton gradient.</text>
</comment>
<comment type="catalytic activity">
    <reaction evidence="1">
        <text>a plastoquinone + NADH + (n+1) H(+)(in) = a plastoquinol + NAD(+) + n H(+)(out)</text>
        <dbReference type="Rhea" id="RHEA:42608"/>
        <dbReference type="Rhea" id="RHEA-COMP:9561"/>
        <dbReference type="Rhea" id="RHEA-COMP:9562"/>
        <dbReference type="ChEBI" id="CHEBI:15378"/>
        <dbReference type="ChEBI" id="CHEBI:17757"/>
        <dbReference type="ChEBI" id="CHEBI:57540"/>
        <dbReference type="ChEBI" id="CHEBI:57945"/>
        <dbReference type="ChEBI" id="CHEBI:62192"/>
    </reaction>
</comment>
<comment type="catalytic activity">
    <reaction evidence="1">
        <text>a plastoquinone + NADPH + (n+1) H(+)(in) = a plastoquinol + NADP(+) + n H(+)(out)</text>
        <dbReference type="Rhea" id="RHEA:42612"/>
        <dbReference type="Rhea" id="RHEA-COMP:9561"/>
        <dbReference type="Rhea" id="RHEA-COMP:9562"/>
        <dbReference type="ChEBI" id="CHEBI:15378"/>
        <dbReference type="ChEBI" id="CHEBI:17757"/>
        <dbReference type="ChEBI" id="CHEBI:57783"/>
        <dbReference type="ChEBI" id="CHEBI:58349"/>
        <dbReference type="ChEBI" id="CHEBI:62192"/>
    </reaction>
</comment>
<comment type="subunit">
    <text evidence="1">NDH is composed of at least 16 different subunits, 5 of which are encoded in the nucleus.</text>
</comment>
<comment type="subcellular location">
    <subcellularLocation>
        <location evidence="1">Plastid</location>
        <location evidence="1">Chloroplast thylakoid membrane</location>
        <topology evidence="1">Multi-pass membrane protein</topology>
    </subcellularLocation>
</comment>
<comment type="similarity">
    <text evidence="1">Belongs to the complex I subunit 2 family.</text>
</comment>
<accession>P0CC53</accession>
<accession>A6H5M6</accession>
<feature type="chain" id="PRO_0000391264" description="NAD(P)H-quinone oxidoreductase subunit 2 B, chloroplastic">
    <location>
        <begin position="1"/>
        <end position="494"/>
    </location>
</feature>
<feature type="transmembrane region" description="Helical" evidence="1">
    <location>
        <begin position="6"/>
        <end position="26"/>
    </location>
</feature>
<feature type="transmembrane region" description="Helical" evidence="1">
    <location>
        <begin position="39"/>
        <end position="59"/>
    </location>
</feature>
<feature type="transmembrane region" description="Helical" evidence="1">
    <location>
        <begin position="81"/>
        <end position="101"/>
    </location>
</feature>
<feature type="transmembrane region" description="Helical" evidence="1">
    <location>
        <begin position="106"/>
        <end position="126"/>
    </location>
</feature>
<feature type="transmembrane region" description="Helical" evidence="1">
    <location>
        <begin position="131"/>
        <end position="151"/>
    </location>
</feature>
<feature type="transmembrane region" description="Helical" evidence="1">
    <location>
        <begin position="166"/>
        <end position="186"/>
    </location>
</feature>
<feature type="transmembrane region" description="Helical" evidence="1">
    <location>
        <begin position="211"/>
        <end position="231"/>
    </location>
</feature>
<feature type="transmembrane region" description="Helical" evidence="1">
    <location>
        <begin position="277"/>
        <end position="297"/>
    </location>
</feature>
<feature type="transmembrane region" description="Helical" evidence="1">
    <location>
        <begin position="305"/>
        <end position="325"/>
    </location>
</feature>
<feature type="transmembrane region" description="Helical" evidence="1">
    <location>
        <begin position="336"/>
        <end position="356"/>
    </location>
</feature>
<feature type="transmembrane region" description="Helical" evidence="1">
    <location>
        <begin position="377"/>
        <end position="397"/>
    </location>
</feature>
<feature type="transmembrane region" description="Helical" evidence="1">
    <location>
        <begin position="413"/>
        <end position="433"/>
    </location>
</feature>
<feature type="transmembrane region" description="Helical" evidence="1">
    <location>
        <begin position="468"/>
        <end position="488"/>
    </location>
</feature>
<geneLocation type="chloroplast"/>
<proteinExistence type="inferred from homology"/>
<gene>
    <name evidence="1" type="primary">ndhB2</name>
</gene>
<evidence type="ECO:0000255" key="1">
    <source>
        <dbReference type="HAMAP-Rule" id="MF_00445"/>
    </source>
</evidence>
<reference key="1">
    <citation type="journal article" date="2007" name="Mol. Biol. Evol.">
        <title>Chloroplast genome (cpDNA) of Cycas taitungensis and 56 cp protein-coding genes of Gnetum parvifolium: insights into cpDNA evolution and phylogeny of extant seed plants.</title>
        <authorList>
            <person name="Wu C.-S."/>
            <person name="Wang Y.-N."/>
            <person name="Liu S.-M."/>
            <person name="Chaw S.-M."/>
        </authorList>
    </citation>
    <scope>NUCLEOTIDE SEQUENCE [LARGE SCALE GENOMIC DNA]</scope>
</reference>
<protein>
    <recommendedName>
        <fullName evidence="1">NAD(P)H-quinone oxidoreductase subunit 2 B, chloroplastic</fullName>
        <ecNumber evidence="1">7.1.1.-</ecNumber>
    </recommendedName>
    <alternativeName>
        <fullName evidence="1">NAD(P)H dehydrogenase, subunit 2 B</fullName>
    </alternativeName>
    <alternativeName>
        <fullName evidence="1">NADH-plastoquinone oxidoreductase subunit 2 B</fullName>
    </alternativeName>
</protein>